<proteinExistence type="inferred from homology"/>
<sequence length="258" mass="28796">MKGPLKIGLMDSGMGGLSVLKGILKYDAELEVVYYGDLKNSPYGEKETSEILELVRDVCKRLQEENVSAILLACNTATSAAAQTLRKEFSIPIFGMEPAIKPAILQNPGKKIALLATPVTQREKKLQRLKAELGAEELILPVSCPGLAGLVDKGEFDEAEKYLRPILKKLREENVENLVLGCTHYIFLKHIILKNFPNVRIYDGNSGTIKHLLNSLQVRQRVSNRSSVSGSVYKLILNSDEELHFRLATELLQFENKF</sequence>
<accession>Q04QQ5</accession>
<dbReference type="EC" id="5.1.1.3" evidence="1"/>
<dbReference type="EMBL" id="CP000350">
    <property type="protein sequence ID" value="ABJ76765.1"/>
    <property type="molecule type" value="Genomic_DNA"/>
</dbReference>
<dbReference type="RefSeq" id="WP_011669676.1">
    <property type="nucleotide sequence ID" value="NC_008510.1"/>
</dbReference>
<dbReference type="SMR" id="Q04QQ5"/>
<dbReference type="KEGG" id="lbj:LBJ_2292"/>
<dbReference type="HOGENOM" id="CLU_052344_1_0_12"/>
<dbReference type="UniPathway" id="UPA00219"/>
<dbReference type="Proteomes" id="UP000000656">
    <property type="component" value="Chromosome 1"/>
</dbReference>
<dbReference type="GO" id="GO:0008881">
    <property type="term" value="F:glutamate racemase activity"/>
    <property type="evidence" value="ECO:0007669"/>
    <property type="project" value="UniProtKB-UniRule"/>
</dbReference>
<dbReference type="GO" id="GO:0071555">
    <property type="term" value="P:cell wall organization"/>
    <property type="evidence" value="ECO:0007669"/>
    <property type="project" value="UniProtKB-KW"/>
</dbReference>
<dbReference type="GO" id="GO:0009252">
    <property type="term" value="P:peptidoglycan biosynthetic process"/>
    <property type="evidence" value="ECO:0007669"/>
    <property type="project" value="UniProtKB-UniRule"/>
</dbReference>
<dbReference type="GO" id="GO:0008360">
    <property type="term" value="P:regulation of cell shape"/>
    <property type="evidence" value="ECO:0007669"/>
    <property type="project" value="UniProtKB-KW"/>
</dbReference>
<dbReference type="Gene3D" id="3.40.50.1860">
    <property type="match status" value="2"/>
</dbReference>
<dbReference type="HAMAP" id="MF_00258">
    <property type="entry name" value="Glu_racemase"/>
    <property type="match status" value="1"/>
</dbReference>
<dbReference type="InterPro" id="IPR015942">
    <property type="entry name" value="Asp/Glu/hydantoin_racemase"/>
</dbReference>
<dbReference type="InterPro" id="IPR001920">
    <property type="entry name" value="Asp/Glu_race"/>
</dbReference>
<dbReference type="InterPro" id="IPR004391">
    <property type="entry name" value="Glu_race"/>
</dbReference>
<dbReference type="NCBIfam" id="TIGR00067">
    <property type="entry name" value="glut_race"/>
    <property type="match status" value="1"/>
</dbReference>
<dbReference type="PANTHER" id="PTHR21198">
    <property type="entry name" value="GLUTAMATE RACEMASE"/>
    <property type="match status" value="1"/>
</dbReference>
<dbReference type="PANTHER" id="PTHR21198:SF3">
    <property type="entry name" value="GLUTAMATE RACEMASE"/>
    <property type="match status" value="1"/>
</dbReference>
<dbReference type="Pfam" id="PF01177">
    <property type="entry name" value="Asp_Glu_race"/>
    <property type="match status" value="1"/>
</dbReference>
<dbReference type="SUPFAM" id="SSF53681">
    <property type="entry name" value="Aspartate/glutamate racemase"/>
    <property type="match status" value="2"/>
</dbReference>
<evidence type="ECO:0000255" key="1">
    <source>
        <dbReference type="HAMAP-Rule" id="MF_00258"/>
    </source>
</evidence>
<organism>
    <name type="scientific">Leptospira borgpetersenii serovar Hardjo-bovis (strain JB197)</name>
    <dbReference type="NCBI Taxonomy" id="355277"/>
    <lineage>
        <taxon>Bacteria</taxon>
        <taxon>Pseudomonadati</taxon>
        <taxon>Spirochaetota</taxon>
        <taxon>Spirochaetia</taxon>
        <taxon>Leptospirales</taxon>
        <taxon>Leptospiraceae</taxon>
        <taxon>Leptospira</taxon>
    </lineage>
</organism>
<reference key="1">
    <citation type="journal article" date="2006" name="Proc. Natl. Acad. Sci. U.S.A.">
        <title>Genome reduction in Leptospira borgpetersenii reflects limited transmission potential.</title>
        <authorList>
            <person name="Bulach D.M."/>
            <person name="Zuerner R.L."/>
            <person name="Wilson P."/>
            <person name="Seemann T."/>
            <person name="McGrath A."/>
            <person name="Cullen P.A."/>
            <person name="Davis J."/>
            <person name="Johnson M."/>
            <person name="Kuczek E."/>
            <person name="Alt D.P."/>
            <person name="Peterson-Burch B."/>
            <person name="Coppel R.L."/>
            <person name="Rood J.I."/>
            <person name="Davies J.K."/>
            <person name="Adler B."/>
        </authorList>
    </citation>
    <scope>NUCLEOTIDE SEQUENCE [LARGE SCALE GENOMIC DNA]</scope>
    <source>
        <strain>JB197</strain>
    </source>
</reference>
<comment type="function">
    <text evidence="1">Provides the (R)-glutamate required for cell wall biosynthesis.</text>
</comment>
<comment type="catalytic activity">
    <reaction evidence="1">
        <text>L-glutamate = D-glutamate</text>
        <dbReference type="Rhea" id="RHEA:12813"/>
        <dbReference type="ChEBI" id="CHEBI:29985"/>
        <dbReference type="ChEBI" id="CHEBI:29986"/>
        <dbReference type="EC" id="5.1.1.3"/>
    </reaction>
</comment>
<comment type="pathway">
    <text evidence="1">Cell wall biogenesis; peptidoglycan biosynthesis.</text>
</comment>
<comment type="similarity">
    <text evidence="1">Belongs to the aspartate/glutamate racemases family.</text>
</comment>
<gene>
    <name evidence="1" type="primary">murI</name>
    <name type="ordered locus">LBJ_2292</name>
</gene>
<keyword id="KW-0133">Cell shape</keyword>
<keyword id="KW-0961">Cell wall biogenesis/degradation</keyword>
<keyword id="KW-0413">Isomerase</keyword>
<keyword id="KW-0573">Peptidoglycan synthesis</keyword>
<feature type="chain" id="PRO_1000047580" description="Glutamate racemase">
    <location>
        <begin position="1"/>
        <end position="258"/>
    </location>
</feature>
<feature type="active site" description="Proton donor/acceptor" evidence="1">
    <location>
        <position position="74"/>
    </location>
</feature>
<feature type="active site" description="Proton donor/acceptor" evidence="1">
    <location>
        <position position="182"/>
    </location>
</feature>
<feature type="binding site" evidence="1">
    <location>
        <begin position="11"/>
        <end position="12"/>
    </location>
    <ligand>
        <name>substrate</name>
    </ligand>
</feature>
<feature type="binding site" evidence="1">
    <location>
        <begin position="43"/>
        <end position="44"/>
    </location>
    <ligand>
        <name>substrate</name>
    </ligand>
</feature>
<feature type="binding site" evidence="1">
    <location>
        <begin position="75"/>
        <end position="76"/>
    </location>
    <ligand>
        <name>substrate</name>
    </ligand>
</feature>
<feature type="binding site" evidence="1">
    <location>
        <begin position="183"/>
        <end position="184"/>
    </location>
    <ligand>
        <name>substrate</name>
    </ligand>
</feature>
<protein>
    <recommendedName>
        <fullName evidence="1">Glutamate racemase</fullName>
        <ecNumber evidence="1">5.1.1.3</ecNumber>
    </recommendedName>
</protein>
<name>MURI_LEPBJ</name>